<sequence length="475" mass="50547">MAEAATRSVGKVTQVIGAVVDVAFEGELPAILNALETDNNGNRLVLEVAQHLGENEVRTIAMDSSEGLVRGQQVIDTGAPISVPVGDETLGRIMNVIGEPVDEAGPLNTAHKRAIHQDAPAYVEQSTEAQILVTGIKVVDLLAPYARGGKIGLFGGAGVGKTVLIMELINNVAKAHGGYSVFAGVGERTREGNDLYHEMIESGVNKHGGGEGSKAALVYGQMNEPPGARARVALTGLTVAEHFRDQGQDVLFFVDNIFRFTQAGSEVSALLGRIPSAVGYQPTLATDMGQMQERITTTTTGSITSVQAIYVPADDLTDPAPATSFAHLDATTVLSRSIAEKGIYPAVDPLDSTSRMLDPMVVGEEHYEVARKVQSTLQRYKALQDIIAILGMDELSEEDKLAVARARKIERFLSQPFFVAEVFTGSPGKLVALEDTIKGFKGLVNGEYDNLPEAAFYMVGSIDEAIEKAKKLAAA</sequence>
<gene>
    <name evidence="1" type="primary">atpD</name>
    <name type="ordered locus">RHECIAT_CH0004151</name>
</gene>
<name>ATPB_RHIE6</name>
<feature type="chain" id="PRO_1000143535" description="ATP synthase subunit beta">
    <location>
        <begin position="1"/>
        <end position="475"/>
    </location>
</feature>
<feature type="binding site" evidence="1">
    <location>
        <begin position="155"/>
        <end position="162"/>
    </location>
    <ligand>
        <name>ATP</name>
        <dbReference type="ChEBI" id="CHEBI:30616"/>
    </ligand>
</feature>
<protein>
    <recommendedName>
        <fullName evidence="1">ATP synthase subunit beta</fullName>
        <ecNumber evidence="1">7.1.2.2</ecNumber>
    </recommendedName>
    <alternativeName>
        <fullName evidence="1">ATP synthase F1 sector subunit beta</fullName>
    </alternativeName>
    <alternativeName>
        <fullName evidence="1">F-ATPase subunit beta</fullName>
    </alternativeName>
</protein>
<organism>
    <name type="scientific">Rhizobium etli (strain CIAT 652)</name>
    <dbReference type="NCBI Taxonomy" id="491916"/>
    <lineage>
        <taxon>Bacteria</taxon>
        <taxon>Pseudomonadati</taxon>
        <taxon>Pseudomonadota</taxon>
        <taxon>Alphaproteobacteria</taxon>
        <taxon>Hyphomicrobiales</taxon>
        <taxon>Rhizobiaceae</taxon>
        <taxon>Rhizobium/Agrobacterium group</taxon>
        <taxon>Rhizobium</taxon>
    </lineage>
</organism>
<reference key="1">
    <citation type="journal article" date="2010" name="Appl. Environ. Microbiol.">
        <title>Conserved symbiotic plasmid DNA sequences in the multireplicon pangenomic structure of Rhizobium etli.</title>
        <authorList>
            <person name="Gonzalez V."/>
            <person name="Acosta J.L."/>
            <person name="Santamaria R.I."/>
            <person name="Bustos P."/>
            <person name="Fernandez J.L."/>
            <person name="Hernandez Gonzalez I.L."/>
            <person name="Diaz R."/>
            <person name="Flores M."/>
            <person name="Palacios R."/>
            <person name="Mora J."/>
            <person name="Davila G."/>
        </authorList>
    </citation>
    <scope>NUCLEOTIDE SEQUENCE [LARGE SCALE GENOMIC DNA]</scope>
    <source>
        <strain>CIAT 652</strain>
    </source>
</reference>
<accession>B3PQ68</accession>
<comment type="function">
    <text evidence="1">Produces ATP from ADP in the presence of a proton gradient across the membrane. The catalytic sites are hosted primarily by the beta subunits.</text>
</comment>
<comment type="catalytic activity">
    <reaction evidence="1">
        <text>ATP + H2O + 4 H(+)(in) = ADP + phosphate + 5 H(+)(out)</text>
        <dbReference type="Rhea" id="RHEA:57720"/>
        <dbReference type="ChEBI" id="CHEBI:15377"/>
        <dbReference type="ChEBI" id="CHEBI:15378"/>
        <dbReference type="ChEBI" id="CHEBI:30616"/>
        <dbReference type="ChEBI" id="CHEBI:43474"/>
        <dbReference type="ChEBI" id="CHEBI:456216"/>
        <dbReference type="EC" id="7.1.2.2"/>
    </reaction>
</comment>
<comment type="subunit">
    <text evidence="1">F-type ATPases have 2 components, CF(1) - the catalytic core - and CF(0) - the membrane proton channel. CF(1) has five subunits: alpha(3), beta(3), gamma(1), delta(1), epsilon(1). CF(0) has three main subunits: a(1), b(2) and c(9-12). The alpha and beta chains form an alternating ring which encloses part of the gamma chain. CF(1) is attached to CF(0) by a central stalk formed by the gamma and epsilon chains, while a peripheral stalk is formed by the delta and b chains.</text>
</comment>
<comment type="subcellular location">
    <subcellularLocation>
        <location evidence="1">Cell inner membrane</location>
        <topology evidence="1">Peripheral membrane protein</topology>
    </subcellularLocation>
</comment>
<comment type="similarity">
    <text evidence="1">Belongs to the ATPase alpha/beta chains family.</text>
</comment>
<dbReference type="EC" id="7.1.2.2" evidence="1"/>
<dbReference type="EMBL" id="CP001074">
    <property type="protein sequence ID" value="ACE93080.1"/>
    <property type="molecule type" value="Genomic_DNA"/>
</dbReference>
<dbReference type="SMR" id="B3PQ68"/>
<dbReference type="KEGG" id="rec:RHECIAT_CH0004151"/>
<dbReference type="eggNOG" id="COG0055">
    <property type="taxonomic scope" value="Bacteria"/>
</dbReference>
<dbReference type="HOGENOM" id="CLU_022398_0_2_5"/>
<dbReference type="Proteomes" id="UP000008817">
    <property type="component" value="Chromosome"/>
</dbReference>
<dbReference type="GO" id="GO:0005886">
    <property type="term" value="C:plasma membrane"/>
    <property type="evidence" value="ECO:0007669"/>
    <property type="project" value="UniProtKB-SubCell"/>
</dbReference>
<dbReference type="GO" id="GO:0045259">
    <property type="term" value="C:proton-transporting ATP synthase complex"/>
    <property type="evidence" value="ECO:0007669"/>
    <property type="project" value="UniProtKB-KW"/>
</dbReference>
<dbReference type="GO" id="GO:0005524">
    <property type="term" value="F:ATP binding"/>
    <property type="evidence" value="ECO:0007669"/>
    <property type="project" value="UniProtKB-UniRule"/>
</dbReference>
<dbReference type="GO" id="GO:0016887">
    <property type="term" value="F:ATP hydrolysis activity"/>
    <property type="evidence" value="ECO:0007669"/>
    <property type="project" value="InterPro"/>
</dbReference>
<dbReference type="GO" id="GO:0046933">
    <property type="term" value="F:proton-transporting ATP synthase activity, rotational mechanism"/>
    <property type="evidence" value="ECO:0007669"/>
    <property type="project" value="UniProtKB-UniRule"/>
</dbReference>
<dbReference type="CDD" id="cd18110">
    <property type="entry name" value="ATP-synt_F1_beta_C"/>
    <property type="match status" value="1"/>
</dbReference>
<dbReference type="CDD" id="cd18115">
    <property type="entry name" value="ATP-synt_F1_beta_N"/>
    <property type="match status" value="1"/>
</dbReference>
<dbReference type="CDD" id="cd01133">
    <property type="entry name" value="F1-ATPase_beta_CD"/>
    <property type="match status" value="1"/>
</dbReference>
<dbReference type="FunFam" id="1.10.1140.10:FF:000001">
    <property type="entry name" value="ATP synthase subunit beta"/>
    <property type="match status" value="1"/>
</dbReference>
<dbReference type="FunFam" id="2.40.10.170:FF:000005">
    <property type="entry name" value="ATP synthase subunit beta"/>
    <property type="match status" value="1"/>
</dbReference>
<dbReference type="FunFam" id="3.40.50.300:FF:000026">
    <property type="entry name" value="ATP synthase subunit beta"/>
    <property type="match status" value="1"/>
</dbReference>
<dbReference type="Gene3D" id="2.40.10.170">
    <property type="match status" value="1"/>
</dbReference>
<dbReference type="Gene3D" id="1.10.1140.10">
    <property type="entry name" value="Bovine Mitochondrial F1-atpase, Atp Synthase Beta Chain, Chain D, domain 3"/>
    <property type="match status" value="1"/>
</dbReference>
<dbReference type="Gene3D" id="3.40.50.300">
    <property type="entry name" value="P-loop containing nucleotide triphosphate hydrolases"/>
    <property type="match status" value="1"/>
</dbReference>
<dbReference type="HAMAP" id="MF_01347">
    <property type="entry name" value="ATP_synth_beta_bact"/>
    <property type="match status" value="1"/>
</dbReference>
<dbReference type="InterPro" id="IPR003593">
    <property type="entry name" value="AAA+_ATPase"/>
</dbReference>
<dbReference type="InterPro" id="IPR055190">
    <property type="entry name" value="ATP-synt_VA_C"/>
</dbReference>
<dbReference type="InterPro" id="IPR005722">
    <property type="entry name" value="ATP_synth_F1_bsu"/>
</dbReference>
<dbReference type="InterPro" id="IPR020003">
    <property type="entry name" value="ATPase_a/bsu_AS"/>
</dbReference>
<dbReference type="InterPro" id="IPR050053">
    <property type="entry name" value="ATPase_alpha/beta_chains"/>
</dbReference>
<dbReference type="InterPro" id="IPR004100">
    <property type="entry name" value="ATPase_F1/V1/A1_a/bsu_N"/>
</dbReference>
<dbReference type="InterPro" id="IPR036121">
    <property type="entry name" value="ATPase_F1/V1/A1_a/bsu_N_sf"/>
</dbReference>
<dbReference type="InterPro" id="IPR000194">
    <property type="entry name" value="ATPase_F1/V1/A1_a/bsu_nucl-bd"/>
</dbReference>
<dbReference type="InterPro" id="IPR024034">
    <property type="entry name" value="ATPase_F1/V1_b/a_C"/>
</dbReference>
<dbReference type="InterPro" id="IPR027417">
    <property type="entry name" value="P-loop_NTPase"/>
</dbReference>
<dbReference type="NCBIfam" id="TIGR01039">
    <property type="entry name" value="atpD"/>
    <property type="match status" value="1"/>
</dbReference>
<dbReference type="PANTHER" id="PTHR15184">
    <property type="entry name" value="ATP SYNTHASE"/>
    <property type="match status" value="1"/>
</dbReference>
<dbReference type="PANTHER" id="PTHR15184:SF71">
    <property type="entry name" value="ATP SYNTHASE SUBUNIT BETA, MITOCHONDRIAL"/>
    <property type="match status" value="1"/>
</dbReference>
<dbReference type="Pfam" id="PF00006">
    <property type="entry name" value="ATP-synt_ab"/>
    <property type="match status" value="1"/>
</dbReference>
<dbReference type="Pfam" id="PF02874">
    <property type="entry name" value="ATP-synt_ab_N"/>
    <property type="match status" value="1"/>
</dbReference>
<dbReference type="Pfam" id="PF22919">
    <property type="entry name" value="ATP-synt_VA_C"/>
    <property type="match status" value="1"/>
</dbReference>
<dbReference type="PIRSF" id="PIRSF039072">
    <property type="entry name" value="ATPase_subunit_beta"/>
    <property type="match status" value="1"/>
</dbReference>
<dbReference type="SMART" id="SM00382">
    <property type="entry name" value="AAA"/>
    <property type="match status" value="1"/>
</dbReference>
<dbReference type="SUPFAM" id="SSF47917">
    <property type="entry name" value="C-terminal domain of alpha and beta subunits of F1 ATP synthase"/>
    <property type="match status" value="1"/>
</dbReference>
<dbReference type="SUPFAM" id="SSF50615">
    <property type="entry name" value="N-terminal domain of alpha and beta subunits of F1 ATP synthase"/>
    <property type="match status" value="1"/>
</dbReference>
<dbReference type="SUPFAM" id="SSF52540">
    <property type="entry name" value="P-loop containing nucleoside triphosphate hydrolases"/>
    <property type="match status" value="1"/>
</dbReference>
<dbReference type="PROSITE" id="PS00152">
    <property type="entry name" value="ATPASE_ALPHA_BETA"/>
    <property type="match status" value="1"/>
</dbReference>
<evidence type="ECO:0000255" key="1">
    <source>
        <dbReference type="HAMAP-Rule" id="MF_01347"/>
    </source>
</evidence>
<keyword id="KW-0066">ATP synthesis</keyword>
<keyword id="KW-0067">ATP-binding</keyword>
<keyword id="KW-0997">Cell inner membrane</keyword>
<keyword id="KW-1003">Cell membrane</keyword>
<keyword id="KW-0139">CF(1)</keyword>
<keyword id="KW-0375">Hydrogen ion transport</keyword>
<keyword id="KW-0406">Ion transport</keyword>
<keyword id="KW-0472">Membrane</keyword>
<keyword id="KW-0547">Nucleotide-binding</keyword>
<keyword id="KW-1278">Translocase</keyword>
<keyword id="KW-0813">Transport</keyword>
<proteinExistence type="inferred from homology"/>